<proteinExistence type="evidence at protein level"/>
<comment type="function">
    <text evidence="2 3 4 5">Responsible for transport of melibiose into the cell, with the concomitant import of a proton (symport system) (PubMed:12775706, PubMed:18177889, PubMed:9209070, PubMed:9375783). Can also transport lactose, and has weak activity with maltose (PubMed:12775706, PubMed:18177889). Cannot transport the analog methyl-1-thio-beta,D-galactopyranoside (TMG) (PubMed:18177889).</text>
</comment>
<comment type="biophysicochemical properties">
    <kinetics>
        <KM evidence="3">0.26 mM for melibiose</KM>
        <KM evidence="3">0.51 mM for lactose</KM>
        <KM evidence="2">14 mM for maltose</KM>
        <Vmax evidence="3">82.0 nmol/min/mg enzyme with melibiose as substrate</Vmax>
        <Vmax evidence="3">54.0 nmol/min/mg enzyme with lactose as substrate</Vmax>
        <Vmax evidence="2">121.0 nmol/min/mg enzyme with maltose as substrate</Vmax>
    </kinetics>
</comment>
<comment type="subcellular location">
    <subcellularLocation>
        <location evidence="9">Cell inner membrane</location>
        <topology evidence="1">Multi-pass membrane protein</topology>
    </subcellularLocation>
</comment>
<comment type="similarity">
    <text evidence="9">Belongs to the major facilitator superfamily. Oligosaccharide:H(+) symporter (OHS) (TC 2.A.1.5) family.</text>
</comment>
<dbReference type="EMBL" id="AB000622">
    <property type="protein sequence ID" value="BAA19154.1"/>
    <property type="molecule type" value="Genomic_DNA"/>
</dbReference>
<dbReference type="EMBL" id="CP001918">
    <property type="protein sequence ID" value="ADF64599.1"/>
    <property type="molecule type" value="Genomic_DNA"/>
</dbReference>
<dbReference type="RefSeq" id="WP_013099342.1">
    <property type="nucleotide sequence ID" value="NC_014121.1"/>
</dbReference>
<dbReference type="RefSeq" id="YP_003615548.1">
    <property type="nucleotide sequence ID" value="NC_014121.1"/>
</dbReference>
<dbReference type="SMR" id="P96517"/>
<dbReference type="STRING" id="716541.ECL_05077"/>
<dbReference type="TCDB" id="2.A.1.5.4">
    <property type="family name" value="the major facilitator superfamily (mfs)"/>
</dbReference>
<dbReference type="EnsemblBacteria" id="ADF64599">
    <property type="protein sequence ID" value="ADF64599"/>
    <property type="gene ID" value="ECL_05077"/>
</dbReference>
<dbReference type="KEGG" id="enc:ECL_05077"/>
<dbReference type="PATRIC" id="fig|716541.4.peg.5208"/>
<dbReference type="eggNOG" id="COG2211">
    <property type="taxonomic scope" value="Bacteria"/>
</dbReference>
<dbReference type="HOGENOM" id="CLU_055585_0_0_6"/>
<dbReference type="OrthoDB" id="7065110at2"/>
<dbReference type="Proteomes" id="UP000002363">
    <property type="component" value="Chromosome"/>
</dbReference>
<dbReference type="GO" id="GO:0005886">
    <property type="term" value="C:plasma membrane"/>
    <property type="evidence" value="ECO:0007669"/>
    <property type="project" value="UniProtKB-SubCell"/>
</dbReference>
<dbReference type="GO" id="GO:0030395">
    <property type="term" value="F:lactose binding"/>
    <property type="evidence" value="ECO:0007669"/>
    <property type="project" value="TreeGrafter"/>
</dbReference>
<dbReference type="GO" id="GO:0015528">
    <property type="term" value="F:lactose:proton symporter activity"/>
    <property type="evidence" value="ECO:0007669"/>
    <property type="project" value="TreeGrafter"/>
</dbReference>
<dbReference type="Gene3D" id="1.20.1250.20">
    <property type="entry name" value="MFS general substrate transporter like domains"/>
    <property type="match status" value="2"/>
</dbReference>
<dbReference type="InterPro" id="IPR000576">
    <property type="entry name" value="LacY/RafB_perm_fam"/>
</dbReference>
<dbReference type="InterPro" id="IPR018457">
    <property type="entry name" value="LacY/RafB_perm_fam_CS"/>
</dbReference>
<dbReference type="InterPro" id="IPR020846">
    <property type="entry name" value="MFS_dom"/>
</dbReference>
<dbReference type="InterPro" id="IPR036259">
    <property type="entry name" value="MFS_trans_sf"/>
</dbReference>
<dbReference type="NCBIfam" id="TIGR00882">
    <property type="entry name" value="2A0105"/>
    <property type="match status" value="1"/>
</dbReference>
<dbReference type="NCBIfam" id="NF007077">
    <property type="entry name" value="PRK09528.1"/>
    <property type="match status" value="1"/>
</dbReference>
<dbReference type="PANTHER" id="PTHR23522:SF10">
    <property type="entry name" value="3-PHENYLPROPIONIC ACID TRANSPORTER-RELATED"/>
    <property type="match status" value="1"/>
</dbReference>
<dbReference type="PANTHER" id="PTHR23522">
    <property type="entry name" value="BLL5896 PROTEIN"/>
    <property type="match status" value="1"/>
</dbReference>
<dbReference type="Pfam" id="PF01306">
    <property type="entry name" value="LacY_symp"/>
    <property type="match status" value="1"/>
</dbReference>
<dbReference type="PRINTS" id="PR00174">
    <property type="entry name" value="LACYSMPORT"/>
</dbReference>
<dbReference type="SUPFAM" id="SSF103473">
    <property type="entry name" value="MFS general substrate transporter"/>
    <property type="match status" value="1"/>
</dbReference>
<dbReference type="PROSITE" id="PS00896">
    <property type="entry name" value="LACY_1"/>
    <property type="match status" value="1"/>
</dbReference>
<dbReference type="PROSITE" id="PS00897">
    <property type="entry name" value="LACY_2"/>
    <property type="match status" value="1"/>
</dbReference>
<dbReference type="PROSITE" id="PS50850">
    <property type="entry name" value="MFS"/>
    <property type="match status" value="1"/>
</dbReference>
<evidence type="ECO:0000255" key="1"/>
<evidence type="ECO:0000269" key="2">
    <source>
    </source>
</evidence>
<evidence type="ECO:0000269" key="3">
    <source>
    </source>
</evidence>
<evidence type="ECO:0000269" key="4">
    <source>
    </source>
</evidence>
<evidence type="ECO:0000269" key="5">
    <source>
    </source>
</evidence>
<evidence type="ECO:0000303" key="6">
    <source>
    </source>
</evidence>
<evidence type="ECO:0000303" key="7">
    <source>
    </source>
</evidence>
<evidence type="ECO:0000303" key="8">
    <source>
    </source>
</evidence>
<evidence type="ECO:0000305" key="9"/>
<evidence type="ECO:0000305" key="10">
    <source>
    </source>
</evidence>
<evidence type="ECO:0000312" key="11">
    <source>
        <dbReference type="EMBL" id="ADF64599.1"/>
    </source>
</evidence>
<gene>
    <name evidence="7 8" type="primary">melY</name>
    <name evidence="11" type="ordered locus">ECL_05077</name>
</gene>
<feature type="chain" id="PRO_0000442742" description="Melibiose permease">
    <location>
        <begin position="1"/>
        <end position="425"/>
    </location>
</feature>
<feature type="topological domain" description="Cytoplasmic" evidence="10">
    <location>
        <begin position="1"/>
        <end position="13"/>
    </location>
</feature>
<feature type="transmembrane region" description="Helical" evidence="1">
    <location>
        <begin position="14"/>
        <end position="34"/>
    </location>
</feature>
<feature type="topological domain" description="Periplasmic" evidence="10">
    <location>
        <begin position="35"/>
        <end position="50"/>
    </location>
</feature>
<feature type="transmembrane region" description="Helical" evidence="1">
    <location>
        <begin position="51"/>
        <end position="71"/>
    </location>
</feature>
<feature type="topological domain" description="Cytoplasmic" evidence="10">
    <location>
        <begin position="72"/>
        <end position="80"/>
    </location>
</feature>
<feature type="transmembrane region" description="Helical" evidence="1">
    <location>
        <begin position="81"/>
        <end position="101"/>
    </location>
</feature>
<feature type="topological domain" description="Periplasmic" evidence="10">
    <location>
        <begin position="102"/>
        <end position="107"/>
    </location>
</feature>
<feature type="transmembrane region" description="Helical" evidence="1">
    <location>
        <begin position="108"/>
        <end position="128"/>
    </location>
</feature>
<feature type="topological domain" description="Cytoplasmic" evidence="10">
    <location>
        <begin position="129"/>
        <end position="149"/>
    </location>
</feature>
<feature type="transmembrane region" description="Helical" evidence="1">
    <location>
        <begin position="150"/>
        <end position="170"/>
    </location>
</feature>
<feature type="topological domain" description="Periplasmic" evidence="10">
    <location>
        <position position="171"/>
    </location>
</feature>
<feature type="transmembrane region" description="Helical" evidence="1">
    <location>
        <begin position="172"/>
        <end position="192"/>
    </location>
</feature>
<feature type="topological domain" description="Cytoplasmic" evidence="10">
    <location>
        <begin position="193"/>
        <end position="227"/>
    </location>
</feature>
<feature type="transmembrane region" description="Helical" evidence="1">
    <location>
        <begin position="228"/>
        <end position="248"/>
    </location>
</feature>
<feature type="topological domain" description="Periplasmic" evidence="10">
    <location>
        <begin position="249"/>
        <end position="267"/>
    </location>
</feature>
<feature type="transmembrane region" description="Helical" evidence="1">
    <location>
        <begin position="268"/>
        <end position="288"/>
    </location>
</feature>
<feature type="topological domain" description="Cytoplasmic" evidence="10">
    <location>
        <begin position="289"/>
        <end position="297"/>
    </location>
</feature>
<feature type="transmembrane region" description="Helical" evidence="1">
    <location>
        <begin position="298"/>
        <end position="318"/>
    </location>
</feature>
<feature type="topological domain" description="Periplasmic" evidence="10">
    <location>
        <begin position="319"/>
        <end position="325"/>
    </location>
</feature>
<feature type="transmembrane region" description="Helical" evidence="1">
    <location>
        <begin position="326"/>
        <end position="346"/>
    </location>
</feature>
<feature type="topological domain" description="Cytoplasmic" evidence="10">
    <location>
        <begin position="347"/>
        <end position="353"/>
    </location>
</feature>
<feature type="transmembrane region" description="Helical" evidence="1">
    <location>
        <begin position="354"/>
        <end position="374"/>
    </location>
</feature>
<feature type="topological domain" description="Periplasmic" evidence="10">
    <location>
        <begin position="375"/>
        <end position="385"/>
    </location>
</feature>
<feature type="transmembrane region" description="Helical" evidence="1">
    <location>
        <begin position="386"/>
        <end position="406"/>
    </location>
</feature>
<feature type="topological domain" description="Cytoplasmic" evidence="10">
    <location>
        <begin position="407"/>
        <end position="425"/>
    </location>
</feature>
<feature type="mutagenesis site" description="Does not affect melibiose transport. Increases affinity for maltose and maltose transport." evidence="2">
    <original>L</original>
    <variation>P</variation>
    <location>
        <position position="88"/>
    </location>
</feature>
<feature type="mutagenesis site" description="Does not affect melibiose transport. Increases affinity for maltose and maltose transport." evidence="2">
    <original>L</original>
    <variation>P</variation>
    <location>
        <position position="91"/>
    </location>
</feature>
<feature type="mutagenesis site" description="Does not affect melibiose transport. Increases affinity for maltose and maltose transport." evidence="2">
    <original>A</original>
    <variation>P</variation>
    <location>
        <position position="182"/>
    </location>
</feature>
<feature type="mutagenesis site" description="No change in transport activity." evidence="3">
    <original>A</original>
    <variation>V</variation>
    <location>
        <position position="367"/>
    </location>
</feature>
<name>MELY_ENTCC</name>
<sequence>MNTTTCTHKDNPNFWIFGLFFFLYFFIMATCFPFLPIWLSDIIGLNKTHTGIVFSCISLSAIAFQPVLGVISDKLGLKKHLLWIISVLLFLFAPFFLYVFAPLLKTNIWLGALSGGLYIGFVFSAGSGAIEAYIERVSRNSAFEYGKARMFGCLGWGLCASTGGILFGIDPSYVFWMGSAAALLLMLLLVVAKPKPNQTAQVMNALGANQPQITAKKVFNLFRQRRMWMFILYVIGVACVYDVFDQQFATFFKTFFATPQEGTRAFGFATTAGEICNAIIMFCSPWIINRIGAKNTLLIAGLIMATRIIGSSFATTAVEVIALKMLHALEVPFLLVGAFKYITGVFDTRLSATIYLIGFQFAKQSAAIFLSAFAGNMYDRIGFQETYLMLGCFVLAITVVSAFTLSSRQEIAAAAGAAALTSQSR</sequence>
<reference key="1">
    <citation type="journal article" date="1997" name="Biochim. Biophys. Acta">
        <title>Sequence of a melibiose transporter gene of Enterobacter cloacae.</title>
        <authorList>
            <person name="Okazaki N."/>
            <person name="Jue X.X."/>
            <person name="Miyake H."/>
            <person name="Kuroda M."/>
            <person name="Shimamoto T."/>
            <person name="Tsuchiya T."/>
        </authorList>
    </citation>
    <scope>NUCLEOTIDE SEQUENCE [GENOMIC DNA]</scope>
    <scope>FUNCTION</scope>
    <source>
        <strain>ATCC 13047 / DSM 30054 / NBRC 13535 / NCTC 10005 / WDCM 00083 / NCDC 279-56</strain>
    </source>
</reference>
<reference key="2">
    <citation type="journal article" date="1997" name="J. Bacteriol.">
        <title>A melibiose transporter and an operon containing its gene in Enterobacter cloacae.</title>
        <authorList>
            <person name="Okazaki N."/>
            <person name="Jue X.X."/>
            <person name="Miyake H."/>
            <person name="Kuroda M."/>
            <person name="Shimamoto T."/>
            <person name="Tsuchiya T."/>
        </authorList>
    </citation>
    <scope>NUCLEOTIDE SEQUENCE [GENOMIC DNA]</scope>
    <scope>FUNCTION</scope>
    <source>
        <strain>ATCC 13047 / DSM 30054 / NBRC 13535 / NCTC 10005 / WDCM 00083 / NCDC 279-56</strain>
    </source>
</reference>
<reference key="3">
    <citation type="journal article" date="2010" name="J. Bacteriol.">
        <title>Complete genome sequence of Enterobacter cloacae subsp. cloacae type strain ATCC 13047.</title>
        <authorList>
            <person name="Ren Y."/>
            <person name="Ren Y."/>
            <person name="Zhou Z."/>
            <person name="Guo X."/>
            <person name="Li Y."/>
            <person name="Feng L."/>
            <person name="Wang L."/>
        </authorList>
    </citation>
    <scope>NUCLEOTIDE SEQUENCE [LARGE SCALE GENOMIC DNA]</scope>
    <source>
        <strain>ATCC 13047 / DSM 30054 / NBRC 13535 / NCTC 10005 / WDCM 00083 / NCDC 279-56</strain>
    </source>
</reference>
<reference key="4">
    <citation type="journal article" date="2003" name="J. Bacteriol.">
        <title>Altered substrate selection of the melibiose transporter (MelY) of Enterobacter cloacae involving point mutations in Leu-88, Leu-91, and Ala-182 that confer enhanced maltose transport.</title>
        <authorList>
            <person name="Shinnick S.G."/>
            <person name="Perez S.A."/>
            <person name="Varela M.F."/>
        </authorList>
    </citation>
    <scope>FUNCTION</scope>
    <scope>BIOPHYSICOCHEMICAL PROPERTIES</scope>
    <scope>MUTAGENESIS OF LEU-88; LEU-91 AND ALA-182</scope>
</reference>
<reference key="5">
    <citation type="journal article" date="2008" name="J. Mol. Biol.">
        <title>Substrate selectivity of the melibiose permease (MelY) from Enterobacter cloacae.</title>
        <authorList>
            <person name="Tavoulari S."/>
            <person name="Frillingos S."/>
        </authorList>
    </citation>
    <scope>FUNCTION</scope>
    <scope>BIOPHYSICOCHEMICAL PROPERTIES</scope>
    <scope>MUTAGENESIS OF ALA-367</scope>
</reference>
<accession>P96517</accession>
<accession>A0A0H3CTM4</accession>
<keyword id="KW-0997">Cell inner membrane</keyword>
<keyword id="KW-1003">Cell membrane</keyword>
<keyword id="KW-0472">Membrane</keyword>
<keyword id="KW-1185">Reference proteome</keyword>
<keyword id="KW-0762">Sugar transport</keyword>
<keyword id="KW-0812">Transmembrane</keyword>
<keyword id="KW-1133">Transmembrane helix</keyword>
<keyword id="KW-0813">Transport</keyword>
<organism>
    <name type="scientific">Enterobacter cloacae subsp. cloacae (strain ATCC 13047 / DSM 30054 / NBRC 13535 / NCTC 10005 / WDCM 00083 / NCDC 279-56)</name>
    <dbReference type="NCBI Taxonomy" id="716541"/>
    <lineage>
        <taxon>Bacteria</taxon>
        <taxon>Pseudomonadati</taxon>
        <taxon>Pseudomonadota</taxon>
        <taxon>Gammaproteobacteria</taxon>
        <taxon>Enterobacterales</taxon>
        <taxon>Enterobacteriaceae</taxon>
        <taxon>Enterobacter</taxon>
        <taxon>Enterobacter cloacae complex</taxon>
    </lineage>
</organism>
<protein>
    <recommendedName>
        <fullName evidence="6">Melibiose permease</fullName>
    </recommendedName>
    <alternativeName>
        <fullName evidence="9">Melibiose transporter MelY</fullName>
    </alternativeName>
</protein>